<keyword id="KW-0963">Cytoplasm</keyword>
<keyword id="KW-0489">Methyltransferase</keyword>
<keyword id="KW-0545">Nucleotide biosynthesis</keyword>
<keyword id="KW-0808">Transferase</keyword>
<protein>
    <recommendedName>
        <fullName evidence="1">Thymidylate synthase</fullName>
        <shortName evidence="1">TS</shortName>
        <shortName evidence="1">TSase</shortName>
        <ecNumber evidence="1">2.1.1.45</ecNumber>
    </recommendedName>
</protein>
<gene>
    <name evidence="1" type="primary">thyA</name>
    <name type="ordered locus">ECED1_3283</name>
</gene>
<reference key="1">
    <citation type="journal article" date="2009" name="PLoS Genet.">
        <title>Organised genome dynamics in the Escherichia coli species results in highly diverse adaptive paths.</title>
        <authorList>
            <person name="Touchon M."/>
            <person name="Hoede C."/>
            <person name="Tenaillon O."/>
            <person name="Barbe V."/>
            <person name="Baeriswyl S."/>
            <person name="Bidet P."/>
            <person name="Bingen E."/>
            <person name="Bonacorsi S."/>
            <person name="Bouchier C."/>
            <person name="Bouvet O."/>
            <person name="Calteau A."/>
            <person name="Chiapello H."/>
            <person name="Clermont O."/>
            <person name="Cruveiller S."/>
            <person name="Danchin A."/>
            <person name="Diard M."/>
            <person name="Dossat C."/>
            <person name="Karoui M.E."/>
            <person name="Frapy E."/>
            <person name="Garry L."/>
            <person name="Ghigo J.M."/>
            <person name="Gilles A.M."/>
            <person name="Johnson J."/>
            <person name="Le Bouguenec C."/>
            <person name="Lescat M."/>
            <person name="Mangenot S."/>
            <person name="Martinez-Jehanne V."/>
            <person name="Matic I."/>
            <person name="Nassif X."/>
            <person name="Oztas S."/>
            <person name="Petit M.A."/>
            <person name="Pichon C."/>
            <person name="Rouy Z."/>
            <person name="Ruf C.S."/>
            <person name="Schneider D."/>
            <person name="Tourret J."/>
            <person name="Vacherie B."/>
            <person name="Vallenet D."/>
            <person name="Medigue C."/>
            <person name="Rocha E.P.C."/>
            <person name="Denamur E."/>
        </authorList>
    </citation>
    <scope>NUCLEOTIDE SEQUENCE [LARGE SCALE GENOMIC DNA]</scope>
    <source>
        <strain>ED1a</strain>
    </source>
</reference>
<proteinExistence type="inferred from homology"/>
<feature type="chain" id="PRO_1000197246" description="Thymidylate synthase">
    <location>
        <begin position="1"/>
        <end position="264"/>
    </location>
</feature>
<feature type="active site" description="Nucleophile" evidence="1">
    <location>
        <position position="146"/>
    </location>
</feature>
<feature type="binding site" description="in other chain" evidence="1">
    <location>
        <position position="21"/>
    </location>
    <ligand>
        <name>dUMP</name>
        <dbReference type="ChEBI" id="CHEBI:246422"/>
        <note>ligand shared between dimeric partners</note>
    </ligand>
</feature>
<feature type="binding site" evidence="1">
    <location>
        <position position="51"/>
    </location>
    <ligand>
        <name>(6R)-5,10-methylene-5,6,7,8-tetrahydrofolate</name>
        <dbReference type="ChEBI" id="CHEBI:15636"/>
    </ligand>
</feature>
<feature type="binding site" evidence="1">
    <location>
        <begin position="126"/>
        <end position="127"/>
    </location>
    <ligand>
        <name>dUMP</name>
        <dbReference type="ChEBI" id="CHEBI:246422"/>
        <note>ligand shared between dimeric partners</note>
    </ligand>
</feature>
<feature type="binding site" description="in other chain" evidence="1">
    <location>
        <begin position="166"/>
        <end position="169"/>
    </location>
    <ligand>
        <name>dUMP</name>
        <dbReference type="ChEBI" id="CHEBI:246422"/>
        <note>ligand shared between dimeric partners</note>
    </ligand>
</feature>
<feature type="binding site" evidence="1">
    <location>
        <position position="169"/>
    </location>
    <ligand>
        <name>(6R)-5,10-methylene-5,6,7,8-tetrahydrofolate</name>
        <dbReference type="ChEBI" id="CHEBI:15636"/>
    </ligand>
</feature>
<feature type="binding site" description="in other chain" evidence="1">
    <location>
        <position position="177"/>
    </location>
    <ligand>
        <name>dUMP</name>
        <dbReference type="ChEBI" id="CHEBI:246422"/>
        <note>ligand shared between dimeric partners</note>
    </ligand>
</feature>
<feature type="binding site" description="in other chain" evidence="1">
    <location>
        <begin position="207"/>
        <end position="209"/>
    </location>
    <ligand>
        <name>dUMP</name>
        <dbReference type="ChEBI" id="CHEBI:246422"/>
        <note>ligand shared between dimeric partners</note>
    </ligand>
</feature>
<feature type="binding site" evidence="1">
    <location>
        <position position="263"/>
    </location>
    <ligand>
        <name>(6R)-5,10-methylene-5,6,7,8-tetrahydrofolate</name>
        <dbReference type="ChEBI" id="CHEBI:15636"/>
    </ligand>
</feature>
<name>TYSY_ECO81</name>
<evidence type="ECO:0000255" key="1">
    <source>
        <dbReference type="HAMAP-Rule" id="MF_00008"/>
    </source>
</evidence>
<dbReference type="EC" id="2.1.1.45" evidence="1"/>
<dbReference type="EMBL" id="CU928162">
    <property type="protein sequence ID" value="CAR09443.2"/>
    <property type="molecule type" value="Genomic_DNA"/>
</dbReference>
<dbReference type="RefSeq" id="WP_000816232.1">
    <property type="nucleotide sequence ID" value="NC_011745.1"/>
</dbReference>
<dbReference type="SMR" id="B7MZC6"/>
<dbReference type="GeneID" id="93779171"/>
<dbReference type="KEGG" id="ecq:ECED1_3283"/>
<dbReference type="HOGENOM" id="CLU_021669_0_0_6"/>
<dbReference type="UniPathway" id="UPA00575"/>
<dbReference type="Proteomes" id="UP000000748">
    <property type="component" value="Chromosome"/>
</dbReference>
<dbReference type="GO" id="GO:0005829">
    <property type="term" value="C:cytosol"/>
    <property type="evidence" value="ECO:0007669"/>
    <property type="project" value="TreeGrafter"/>
</dbReference>
<dbReference type="GO" id="GO:0004799">
    <property type="term" value="F:thymidylate synthase activity"/>
    <property type="evidence" value="ECO:0007669"/>
    <property type="project" value="UniProtKB-UniRule"/>
</dbReference>
<dbReference type="GO" id="GO:0006231">
    <property type="term" value="P:dTMP biosynthetic process"/>
    <property type="evidence" value="ECO:0007669"/>
    <property type="project" value="UniProtKB-UniRule"/>
</dbReference>
<dbReference type="GO" id="GO:0006235">
    <property type="term" value="P:dTTP biosynthetic process"/>
    <property type="evidence" value="ECO:0007669"/>
    <property type="project" value="UniProtKB-UniRule"/>
</dbReference>
<dbReference type="GO" id="GO:0032259">
    <property type="term" value="P:methylation"/>
    <property type="evidence" value="ECO:0007669"/>
    <property type="project" value="UniProtKB-KW"/>
</dbReference>
<dbReference type="CDD" id="cd00351">
    <property type="entry name" value="TS_Pyrimidine_HMase"/>
    <property type="match status" value="1"/>
</dbReference>
<dbReference type="FunFam" id="3.30.572.10:FF:000001">
    <property type="entry name" value="Thymidylate synthase"/>
    <property type="match status" value="1"/>
</dbReference>
<dbReference type="Gene3D" id="3.30.572.10">
    <property type="entry name" value="Thymidylate synthase/dCMP hydroxymethylase domain"/>
    <property type="match status" value="1"/>
</dbReference>
<dbReference type="HAMAP" id="MF_00008">
    <property type="entry name" value="Thymidy_synth_bact"/>
    <property type="match status" value="1"/>
</dbReference>
<dbReference type="InterPro" id="IPR045097">
    <property type="entry name" value="Thymidate_synth/dCMP_Mease"/>
</dbReference>
<dbReference type="InterPro" id="IPR023451">
    <property type="entry name" value="Thymidate_synth/dCMP_Mease_dom"/>
</dbReference>
<dbReference type="InterPro" id="IPR036926">
    <property type="entry name" value="Thymidate_synth/dCMP_Mease_sf"/>
</dbReference>
<dbReference type="InterPro" id="IPR000398">
    <property type="entry name" value="Thymidylate_synthase"/>
</dbReference>
<dbReference type="InterPro" id="IPR020940">
    <property type="entry name" value="Thymidylate_synthase_AS"/>
</dbReference>
<dbReference type="NCBIfam" id="NF002497">
    <property type="entry name" value="PRK01827.1-3"/>
    <property type="match status" value="1"/>
</dbReference>
<dbReference type="NCBIfam" id="NF002499">
    <property type="entry name" value="PRK01827.1-5"/>
    <property type="match status" value="1"/>
</dbReference>
<dbReference type="NCBIfam" id="TIGR03284">
    <property type="entry name" value="thym_sym"/>
    <property type="match status" value="2"/>
</dbReference>
<dbReference type="PANTHER" id="PTHR11548:SF9">
    <property type="entry name" value="THYMIDYLATE SYNTHASE"/>
    <property type="match status" value="1"/>
</dbReference>
<dbReference type="PANTHER" id="PTHR11548">
    <property type="entry name" value="THYMIDYLATE SYNTHASE 1"/>
    <property type="match status" value="1"/>
</dbReference>
<dbReference type="Pfam" id="PF00303">
    <property type="entry name" value="Thymidylat_synt"/>
    <property type="match status" value="1"/>
</dbReference>
<dbReference type="PRINTS" id="PR00108">
    <property type="entry name" value="THYMDSNTHASE"/>
</dbReference>
<dbReference type="SUPFAM" id="SSF55831">
    <property type="entry name" value="Thymidylate synthase/dCMP hydroxymethylase"/>
    <property type="match status" value="1"/>
</dbReference>
<dbReference type="PROSITE" id="PS00091">
    <property type="entry name" value="THYMIDYLATE_SYNTHASE"/>
    <property type="match status" value="1"/>
</dbReference>
<organism>
    <name type="scientific">Escherichia coli O81 (strain ED1a)</name>
    <dbReference type="NCBI Taxonomy" id="585397"/>
    <lineage>
        <taxon>Bacteria</taxon>
        <taxon>Pseudomonadati</taxon>
        <taxon>Pseudomonadota</taxon>
        <taxon>Gammaproteobacteria</taxon>
        <taxon>Enterobacterales</taxon>
        <taxon>Enterobacteriaceae</taxon>
        <taxon>Escherichia</taxon>
    </lineage>
</organism>
<accession>B7MZC6</accession>
<sequence>MKQYLELMQKVLDEGTQKNDRTGTGTLSIFGHQMRFNLQDGFPLVTTKRCHLRSIIHELLWFLQGDTNIAYLHENNVTIWDEWADENGDLGPVYGKQWRAWPTPDGRHIDQITTVLNQLKNDPDSRRIIVSAWNVGELDKMALAPCHAFFQFYVADGKLSCQLYQRSCDVFLGLPFNIASYALLVHMMAQQCDLEVGDFVWTGGDTHLYSNHMDQTHLQLSREPRPLPKLIIKRKPESIFDYRFEDFEIEGYDPHPGIKAPVAI</sequence>
<comment type="function">
    <text evidence="1">Catalyzes the reductive methylation of 2'-deoxyuridine-5'-monophosphate (dUMP) to 2'-deoxythymidine-5'-monophosphate (dTMP) while utilizing 5,10-methylenetetrahydrofolate (mTHF) as the methyl donor and reductant in the reaction, yielding dihydrofolate (DHF) as a by-product. This enzymatic reaction provides an intracellular de novo source of dTMP, an essential precursor for DNA biosynthesis.</text>
</comment>
<comment type="catalytic activity">
    <reaction evidence="1">
        <text>dUMP + (6R)-5,10-methylene-5,6,7,8-tetrahydrofolate = 7,8-dihydrofolate + dTMP</text>
        <dbReference type="Rhea" id="RHEA:12104"/>
        <dbReference type="ChEBI" id="CHEBI:15636"/>
        <dbReference type="ChEBI" id="CHEBI:57451"/>
        <dbReference type="ChEBI" id="CHEBI:63528"/>
        <dbReference type="ChEBI" id="CHEBI:246422"/>
        <dbReference type="EC" id="2.1.1.45"/>
    </reaction>
</comment>
<comment type="pathway">
    <text evidence="1">Pyrimidine metabolism; dTTP biosynthesis.</text>
</comment>
<comment type="subunit">
    <text evidence="1">Homodimer.</text>
</comment>
<comment type="subcellular location">
    <subcellularLocation>
        <location evidence="1">Cytoplasm</location>
    </subcellularLocation>
</comment>
<comment type="similarity">
    <text evidence="1">Belongs to the thymidylate synthase family. Bacterial-type ThyA subfamily.</text>
</comment>